<gene>
    <name type="primary">Ciart</name>
    <name type="synonym">Gm129</name>
</gene>
<dbReference type="EMBL" id="AK156084">
    <property type="protein sequence ID" value="BAE33580.1"/>
    <property type="molecule type" value="mRNA"/>
</dbReference>
<dbReference type="EMBL" id="AK164001">
    <property type="protein sequence ID" value="BAE37582.1"/>
    <property type="molecule type" value="mRNA"/>
</dbReference>
<dbReference type="CCDS" id="CCDS50997.1"/>
<dbReference type="RefSeq" id="NP_001028474.1">
    <property type="nucleotide sequence ID" value="NM_001033302.3"/>
</dbReference>
<dbReference type="RefSeq" id="NP_001398248.1">
    <property type="nucleotide sequence ID" value="NM_001411319.1"/>
</dbReference>
<dbReference type="RefSeq" id="NP_001398249.1">
    <property type="nucleotide sequence ID" value="NM_001411320.1"/>
</dbReference>
<dbReference type="RefSeq" id="NP_001398250.1">
    <property type="nucleotide sequence ID" value="NM_001411321.1"/>
</dbReference>
<dbReference type="RefSeq" id="NP_001398251.1">
    <property type="nucleotide sequence ID" value="NM_001411322.1"/>
</dbReference>
<dbReference type="RefSeq" id="NP_001398252.1">
    <property type="nucleotide sequence ID" value="NM_001411323.1"/>
</dbReference>
<dbReference type="RefSeq" id="XP_006501437.1">
    <property type="nucleotide sequence ID" value="XM_006501374.3"/>
</dbReference>
<dbReference type="RefSeq" id="XP_006501438.1">
    <property type="nucleotide sequence ID" value="XM_006501375.3"/>
</dbReference>
<dbReference type="DIP" id="DIP-60818N"/>
<dbReference type="FunCoup" id="Q3TQ03">
    <property type="interactions" value="839"/>
</dbReference>
<dbReference type="IntAct" id="Q3TQ03">
    <property type="interactions" value="6"/>
</dbReference>
<dbReference type="STRING" id="10090.ENSMUSP00000124943"/>
<dbReference type="GlyGen" id="Q3TQ03">
    <property type="glycosylation" value="2 sites, 1 O-linked glycan (1 site)"/>
</dbReference>
<dbReference type="iPTMnet" id="Q3TQ03"/>
<dbReference type="PhosphoSitePlus" id="Q3TQ03"/>
<dbReference type="PaxDb" id="10090-ENSMUSP00000124943"/>
<dbReference type="Antibodypedia" id="34023">
    <property type="antibodies" value="137 antibodies from 20 providers"/>
</dbReference>
<dbReference type="Ensembl" id="ENSMUST00000036418.10">
    <property type="protein sequence ID" value="ENSMUSP00000049308.4"/>
    <property type="gene ID" value="ENSMUSG00000038550.11"/>
</dbReference>
<dbReference type="Ensembl" id="ENSMUST00000159739.8">
    <property type="protein sequence ID" value="ENSMUSP00000124943.2"/>
    <property type="gene ID" value="ENSMUSG00000038550.11"/>
</dbReference>
<dbReference type="GeneID" id="229599"/>
<dbReference type="KEGG" id="mmu:229599"/>
<dbReference type="UCSC" id="uc008qll.1">
    <property type="organism name" value="mouse"/>
</dbReference>
<dbReference type="AGR" id="MGI:2684975"/>
<dbReference type="CTD" id="148523"/>
<dbReference type="MGI" id="MGI:2684975">
    <property type="gene designation" value="Ciart"/>
</dbReference>
<dbReference type="VEuPathDB" id="HostDB:ENSMUSG00000038550"/>
<dbReference type="eggNOG" id="ENOG502RZ6H">
    <property type="taxonomic scope" value="Eukaryota"/>
</dbReference>
<dbReference type="GeneTree" id="ENSGT00390000018360"/>
<dbReference type="HOGENOM" id="CLU_060548_0_0_1"/>
<dbReference type="InParanoid" id="Q3TQ03"/>
<dbReference type="OMA" id="REMTVGH"/>
<dbReference type="OrthoDB" id="9949430at2759"/>
<dbReference type="PhylomeDB" id="Q3TQ03"/>
<dbReference type="TreeFam" id="TF332541"/>
<dbReference type="BioGRID-ORCS" id="229599">
    <property type="hits" value="1 hit in 70 CRISPR screens"/>
</dbReference>
<dbReference type="PRO" id="PR:Q3TQ03"/>
<dbReference type="Proteomes" id="UP000000589">
    <property type="component" value="Chromosome 3"/>
</dbReference>
<dbReference type="RNAct" id="Q3TQ03">
    <property type="molecule type" value="protein"/>
</dbReference>
<dbReference type="Bgee" id="ENSMUSG00000038550">
    <property type="expression patterns" value="Expressed in retinal neural layer and 151 other cell types or tissues"/>
</dbReference>
<dbReference type="ExpressionAtlas" id="Q3TQ03">
    <property type="expression patterns" value="baseline and differential"/>
</dbReference>
<dbReference type="GO" id="GO:0005634">
    <property type="term" value="C:nucleus"/>
    <property type="evidence" value="ECO:0000314"/>
    <property type="project" value="UniProtKB"/>
</dbReference>
<dbReference type="GO" id="GO:0016605">
    <property type="term" value="C:PML body"/>
    <property type="evidence" value="ECO:0007669"/>
    <property type="project" value="UniProtKB-SubCell"/>
</dbReference>
<dbReference type="GO" id="GO:0070888">
    <property type="term" value="F:E-box binding"/>
    <property type="evidence" value="ECO:0000314"/>
    <property type="project" value="UniProtKB"/>
</dbReference>
<dbReference type="GO" id="GO:0000978">
    <property type="term" value="F:RNA polymerase II cis-regulatory region sequence-specific DNA binding"/>
    <property type="evidence" value="ECO:0000314"/>
    <property type="project" value="UniProtKB"/>
</dbReference>
<dbReference type="GO" id="GO:0032922">
    <property type="term" value="P:circadian regulation of gene expression"/>
    <property type="evidence" value="ECO:0000315"/>
    <property type="project" value="UniProtKB"/>
</dbReference>
<dbReference type="GO" id="GO:0045475">
    <property type="term" value="P:locomotor rhythm"/>
    <property type="evidence" value="ECO:0000315"/>
    <property type="project" value="UniProtKB"/>
</dbReference>
<dbReference type="GO" id="GO:0045892">
    <property type="term" value="P:negative regulation of DNA-templated transcription"/>
    <property type="evidence" value="ECO:0000314"/>
    <property type="project" value="UniProtKB"/>
</dbReference>
<dbReference type="InterPro" id="IPR031373">
    <property type="entry name" value="Ciart"/>
</dbReference>
<dbReference type="PANTHER" id="PTHR35441">
    <property type="entry name" value="CIRCADIAN-ASSOCIATED TRANSCRIPTIONAL REPRESSOR"/>
    <property type="match status" value="1"/>
</dbReference>
<dbReference type="PANTHER" id="PTHR35441:SF1">
    <property type="entry name" value="CIRCADIAN-ASSOCIATED TRANSCRIPTIONAL REPRESSOR"/>
    <property type="match status" value="1"/>
</dbReference>
<dbReference type="Pfam" id="PF15673">
    <property type="entry name" value="Ciart"/>
    <property type="match status" value="1"/>
</dbReference>
<proteinExistence type="evidence at protein level"/>
<name>CIART_MOUSE</name>
<reference key="1">
    <citation type="journal article" date="2005" name="Science">
        <title>The transcriptional landscape of the mammalian genome.</title>
        <authorList>
            <person name="Carninci P."/>
            <person name="Kasukawa T."/>
            <person name="Katayama S."/>
            <person name="Gough J."/>
            <person name="Frith M.C."/>
            <person name="Maeda N."/>
            <person name="Oyama R."/>
            <person name="Ravasi T."/>
            <person name="Lenhard B."/>
            <person name="Wells C."/>
            <person name="Kodzius R."/>
            <person name="Shimokawa K."/>
            <person name="Bajic V.B."/>
            <person name="Brenner S.E."/>
            <person name="Batalov S."/>
            <person name="Forrest A.R."/>
            <person name="Zavolan M."/>
            <person name="Davis M.J."/>
            <person name="Wilming L.G."/>
            <person name="Aidinis V."/>
            <person name="Allen J.E."/>
            <person name="Ambesi-Impiombato A."/>
            <person name="Apweiler R."/>
            <person name="Aturaliya R.N."/>
            <person name="Bailey T.L."/>
            <person name="Bansal M."/>
            <person name="Baxter L."/>
            <person name="Beisel K.W."/>
            <person name="Bersano T."/>
            <person name="Bono H."/>
            <person name="Chalk A.M."/>
            <person name="Chiu K.P."/>
            <person name="Choudhary V."/>
            <person name="Christoffels A."/>
            <person name="Clutterbuck D.R."/>
            <person name="Crowe M.L."/>
            <person name="Dalla E."/>
            <person name="Dalrymple B.P."/>
            <person name="de Bono B."/>
            <person name="Della Gatta G."/>
            <person name="di Bernardo D."/>
            <person name="Down T."/>
            <person name="Engstrom P."/>
            <person name="Fagiolini M."/>
            <person name="Faulkner G."/>
            <person name="Fletcher C.F."/>
            <person name="Fukushima T."/>
            <person name="Furuno M."/>
            <person name="Futaki S."/>
            <person name="Gariboldi M."/>
            <person name="Georgii-Hemming P."/>
            <person name="Gingeras T.R."/>
            <person name="Gojobori T."/>
            <person name="Green R.E."/>
            <person name="Gustincich S."/>
            <person name="Harbers M."/>
            <person name="Hayashi Y."/>
            <person name="Hensch T.K."/>
            <person name="Hirokawa N."/>
            <person name="Hill D."/>
            <person name="Huminiecki L."/>
            <person name="Iacono M."/>
            <person name="Ikeo K."/>
            <person name="Iwama A."/>
            <person name="Ishikawa T."/>
            <person name="Jakt M."/>
            <person name="Kanapin A."/>
            <person name="Katoh M."/>
            <person name="Kawasawa Y."/>
            <person name="Kelso J."/>
            <person name="Kitamura H."/>
            <person name="Kitano H."/>
            <person name="Kollias G."/>
            <person name="Krishnan S.P."/>
            <person name="Kruger A."/>
            <person name="Kummerfeld S.K."/>
            <person name="Kurochkin I.V."/>
            <person name="Lareau L.F."/>
            <person name="Lazarevic D."/>
            <person name="Lipovich L."/>
            <person name="Liu J."/>
            <person name="Liuni S."/>
            <person name="McWilliam S."/>
            <person name="Madan Babu M."/>
            <person name="Madera M."/>
            <person name="Marchionni L."/>
            <person name="Matsuda H."/>
            <person name="Matsuzawa S."/>
            <person name="Miki H."/>
            <person name="Mignone F."/>
            <person name="Miyake S."/>
            <person name="Morris K."/>
            <person name="Mottagui-Tabar S."/>
            <person name="Mulder N."/>
            <person name="Nakano N."/>
            <person name="Nakauchi H."/>
            <person name="Ng P."/>
            <person name="Nilsson R."/>
            <person name="Nishiguchi S."/>
            <person name="Nishikawa S."/>
            <person name="Nori F."/>
            <person name="Ohara O."/>
            <person name="Okazaki Y."/>
            <person name="Orlando V."/>
            <person name="Pang K.C."/>
            <person name="Pavan W.J."/>
            <person name="Pavesi G."/>
            <person name="Pesole G."/>
            <person name="Petrovsky N."/>
            <person name="Piazza S."/>
            <person name="Reed J."/>
            <person name="Reid J.F."/>
            <person name="Ring B.Z."/>
            <person name="Ringwald M."/>
            <person name="Rost B."/>
            <person name="Ruan Y."/>
            <person name="Salzberg S.L."/>
            <person name="Sandelin A."/>
            <person name="Schneider C."/>
            <person name="Schoenbach C."/>
            <person name="Sekiguchi K."/>
            <person name="Semple C.A."/>
            <person name="Seno S."/>
            <person name="Sessa L."/>
            <person name="Sheng Y."/>
            <person name="Shibata Y."/>
            <person name="Shimada H."/>
            <person name="Shimada K."/>
            <person name="Silva D."/>
            <person name="Sinclair B."/>
            <person name="Sperling S."/>
            <person name="Stupka E."/>
            <person name="Sugiura K."/>
            <person name="Sultana R."/>
            <person name="Takenaka Y."/>
            <person name="Taki K."/>
            <person name="Tammoja K."/>
            <person name="Tan S.L."/>
            <person name="Tang S."/>
            <person name="Taylor M.S."/>
            <person name="Tegner J."/>
            <person name="Teichmann S.A."/>
            <person name="Ueda H.R."/>
            <person name="van Nimwegen E."/>
            <person name="Verardo R."/>
            <person name="Wei C.L."/>
            <person name="Yagi K."/>
            <person name="Yamanishi H."/>
            <person name="Zabarovsky E."/>
            <person name="Zhu S."/>
            <person name="Zimmer A."/>
            <person name="Hide W."/>
            <person name="Bult C."/>
            <person name="Grimmond S.M."/>
            <person name="Teasdale R.D."/>
            <person name="Liu E.T."/>
            <person name="Brusic V."/>
            <person name="Quackenbush J."/>
            <person name="Wahlestedt C."/>
            <person name="Mattick J.S."/>
            <person name="Hume D.A."/>
            <person name="Kai C."/>
            <person name="Sasaki D."/>
            <person name="Tomaru Y."/>
            <person name="Fukuda S."/>
            <person name="Kanamori-Katayama M."/>
            <person name="Suzuki M."/>
            <person name="Aoki J."/>
            <person name="Arakawa T."/>
            <person name="Iida J."/>
            <person name="Imamura K."/>
            <person name="Itoh M."/>
            <person name="Kato T."/>
            <person name="Kawaji H."/>
            <person name="Kawagashira N."/>
            <person name="Kawashima T."/>
            <person name="Kojima M."/>
            <person name="Kondo S."/>
            <person name="Konno H."/>
            <person name="Nakano K."/>
            <person name="Ninomiya N."/>
            <person name="Nishio T."/>
            <person name="Okada M."/>
            <person name="Plessy C."/>
            <person name="Shibata K."/>
            <person name="Shiraki T."/>
            <person name="Suzuki S."/>
            <person name="Tagami M."/>
            <person name="Waki K."/>
            <person name="Watahiki A."/>
            <person name="Okamura-Oho Y."/>
            <person name="Suzuki H."/>
            <person name="Kawai J."/>
            <person name="Hayashizaki Y."/>
        </authorList>
    </citation>
    <scope>NUCLEOTIDE SEQUENCE [LARGE SCALE MRNA]</scope>
    <source>
        <strain>C57BL/6J</strain>
        <strain>NOD</strain>
        <tissue>Spleen</tissue>
    </source>
</reference>
<reference key="2">
    <citation type="journal article" date="2014" name="J. Biol. Chem.">
        <title>Gene model 129 (Gm129) encodes a novel transcriptional repressor that modulates circadian gene expression.</title>
        <authorList>
            <person name="Annayev Y."/>
            <person name="Adar S."/>
            <person name="Chiou Y.Y."/>
            <person name="Lieb J."/>
            <person name="Sancar A."/>
            <person name="Ye R."/>
        </authorList>
    </citation>
    <scope>FUNCTION</scope>
    <scope>SUBCELLULAR LOCATION</scope>
    <scope>DISRUPTION PHENOTYPE</scope>
    <scope>TISSUE SPECIFICITY</scope>
    <scope>INTERACTION WITH BMAL1 AND PER2</scope>
</reference>
<reference key="3">
    <citation type="journal article" date="2014" name="PLoS Biol.">
        <title>Machine learning helps identify CHRONO as a circadian clock component.</title>
        <authorList>
            <person name="Anafi R.C."/>
            <person name="Lee Y."/>
            <person name="Sato T.K."/>
            <person name="Venkataraman A."/>
            <person name="Ramanathan C."/>
            <person name="Kavakli I.H."/>
            <person name="Hughes M.E."/>
            <person name="Baggs J.E."/>
            <person name="Growe J."/>
            <person name="Liu A.C."/>
            <person name="Kim J."/>
            <person name="Hogenesch J.B."/>
        </authorList>
    </citation>
    <scope>FUNCTION</scope>
    <scope>INDUCTION</scope>
    <scope>DISRUPTION PHENOTYPE</scope>
    <scope>SUBCELLULAR LOCATION</scope>
    <scope>INTERACTION WITH BMAL1 AND PER2</scope>
</reference>
<reference key="4">
    <citation type="journal article" date="2014" name="PLoS Biol.">
        <title>A novel protein, CHRONO, functions as a core component of the mammalian circadian clock.</title>
        <authorList>
            <person name="Goriki A."/>
            <person name="Hatanaka F."/>
            <person name="Myung J."/>
            <person name="Kim J.K."/>
            <person name="Yoritaka T."/>
            <person name="Tanoue S."/>
            <person name="Abe T."/>
            <person name="Kiyonari H."/>
            <person name="Fujimoto K."/>
            <person name="Kato Y."/>
            <person name="Todo T."/>
            <person name="Matsubara A."/>
            <person name="Forger D."/>
            <person name="Takumi T."/>
        </authorList>
    </citation>
    <scope>FUNCTION</scope>
    <scope>INDUCTION</scope>
    <scope>DISRUPTION PHENOTYPE</scope>
    <scope>INTERACTION WITH BMAL1; PER2; CRY2; BHLHE41; HDAC1 AND NR3C1</scope>
</reference>
<sequence>MDSPSSVSSYSSSSLSPSFSTSSVNSDFSFPSDNEREGKGTHELRPDTVGQRGGSRPSPGPIRCRHRPRVSSNQHTAPHLEQQGSEVKRSRDGEQETSLNTQGCTTEGDLLFAQKCKELQGFIRPLTDLLNGLKMGRFDRGLSSFQQSVAMDRIQRIVGVLQKPQMGERYLGTLLQVEGMLKTWFPHIAAQKSSSGGSRHQISKHFPSHHGDPGAASPAPLLEKMGQTQLGHLVLKPKQPWHLTGWPAMNLTWIHSTPICNPPLSSQGSASGHSPIGTGASIGVILVLQKGGQPFTHSAPGTPVPPTPLSPVVPGDLKKLPGEEPRCHSLPVTLPSDWSCILCPPVLPTTDREMTKGHPEPQMTSHPPVAPDPQP</sequence>
<comment type="function">
    <text evidence="2 3 4">Transcriptional repressor which forms a negative regulatory component of the circadian clock and acts independently of the circadian transcriptional repressors: CRY1, CRY2 and BHLHE41. In a histone deacetylase-dependent manner represses the transcriptional activator activity of the CLOCK-BMAL1 heterodimer. Abrogates the interaction of BMAL1 with the transcriptional coactivator CREBBP and can repress the histone acetyl-transferase activity of the CLOCK-BMAL1 heterodimer, reducing histone acetylation of its target genes. Rhythmically binds the E-box elements (5'-CACGTG-3') on circadian gene promoters and its occupancy shows circadian oscillation antiphasic to BMAL1. Interacts with the glucocorticoid receptor (NR3C1) and contributes to the repressive function in the glucocorticoid response.</text>
</comment>
<comment type="subunit">
    <text evidence="2 3 4">Interacts with BMAL1, PER2, CRY2, BHLHE41, HDAC1 NR3C1.</text>
</comment>
<comment type="interaction">
    <interactant intactId="EBI-16101489">
        <id>Q3TQ03</id>
    </interactant>
    <interactant intactId="EBI-6143801">
        <id>Q99PV5</id>
        <label>Bhlhe41</label>
    </interactant>
    <organismsDiffer>false</organismsDiffer>
    <experiments>2</experiments>
</comment>
<comment type="interaction">
    <interactant intactId="EBI-16101489">
        <id>Q3TQ03</id>
    </interactant>
    <interactant intactId="EBI-644534">
        <id>Q9WTL8</id>
        <label>Bmal1</label>
    </interactant>
    <organismsDiffer>false</organismsDiffer>
    <experiments>3</experiments>
</comment>
<comment type="interaction">
    <interactant intactId="EBI-16101489">
        <id>Q3TQ03</id>
    </interactant>
    <interactant intactId="EBI-1266619">
        <id>Q9R194</id>
        <label>Cry2</label>
    </interactant>
    <organismsDiffer>false</organismsDiffer>
    <experiments>2</experiments>
</comment>
<comment type="interaction">
    <interactant intactId="EBI-16101489">
        <id>Q3TQ03</id>
    </interactant>
    <interactant intactId="EBI-301912">
        <id>O09106</id>
        <label>Hdac1</label>
    </interactant>
    <organismsDiffer>false</organismsDiffer>
    <experiments>2</experiments>
</comment>
<comment type="interaction">
    <interactant intactId="EBI-16101489">
        <id>Q3TQ03</id>
    </interactant>
    <interactant intactId="EBI-1266779">
        <id>O54943</id>
        <label>Per2</label>
    </interactant>
    <organismsDiffer>false</organismsDiffer>
    <experiments>2</experiments>
</comment>
<comment type="subcellular location">
    <subcellularLocation>
        <location>Nucleus</location>
    </subcellularLocation>
    <subcellularLocation>
        <location>Nucleus</location>
        <location>PML body</location>
    </subcellularLocation>
    <text>Co-localizes with the CLOCK-BMAL1 heterodimer in the PML body.</text>
</comment>
<comment type="induction">
    <text evidence="3 4">Expression in the liver oscillates in a circadian manner with highest levels at Zeitgeber time (ZT) 12 hours (at protein level). Expression in the heart, lung, stomach and kidney oscillate in a circadian manner with highest levels at approximately circadian time (CT) 12 hours. Its expression levels peak at circadian time 12 hours (CT12), 8 hours earlier than the peak of PER1/2 and CRY1/2 transcriptional repressors (peak CT20-CT24). Thus, it can repress the CLOCK-BMAL1 activity in a different time window compared to CRY and PER proteins.</text>
</comment>
<comment type="disruption phenotype">
    <text evidence="2 3 4">Mice exhibit a longer circadian period of locomotor activity, alteration in the expression of core clock genes and impairment of the response of the circadian clock to stress. The peaks of DBP, NR1D1 and PER1 gene expression persists longer in the liver between Zeitgeber times (ZT) 12-14 hours.</text>
</comment>
<protein>
    <recommendedName>
        <fullName>Circadian-associated transcriptional repressor</fullName>
    </recommendedName>
    <alternativeName>
        <fullName>ChIP-derived repressor of network oscillator</fullName>
        <shortName>Chrono</shortName>
    </alternativeName>
    <alternativeName>
        <fullName>Computationally highlighted repressor of the network oscillator</fullName>
    </alternativeName>
</protein>
<keyword id="KW-0090">Biological rhythms</keyword>
<keyword id="KW-0539">Nucleus</keyword>
<keyword id="KW-1185">Reference proteome</keyword>
<keyword id="KW-0678">Repressor</keyword>
<keyword id="KW-0804">Transcription</keyword>
<keyword id="KW-0805">Transcription regulation</keyword>
<accession>Q3TQ03</accession>
<accession>Q3U1B8</accession>
<feature type="chain" id="PRO_0000251194" description="Circadian-associated transcriptional repressor">
    <location>
        <begin position="1"/>
        <end position="375"/>
    </location>
</feature>
<feature type="region of interest" description="Disordered" evidence="1">
    <location>
        <begin position="1"/>
        <end position="102"/>
    </location>
</feature>
<feature type="region of interest" description="Disordered" evidence="1">
    <location>
        <begin position="192"/>
        <end position="218"/>
    </location>
</feature>
<feature type="region of interest" description="Disordered" evidence="1">
    <location>
        <begin position="351"/>
        <end position="375"/>
    </location>
</feature>
<feature type="compositionally biased region" description="Low complexity" evidence="1">
    <location>
        <begin position="1"/>
        <end position="32"/>
    </location>
</feature>
<feature type="compositionally biased region" description="Basic and acidic residues" evidence="1">
    <location>
        <begin position="33"/>
        <end position="46"/>
    </location>
</feature>
<feature type="sequence conflict" description="In Ref. 1; BAE33580." evidence="5" ref="1">
    <original>D</original>
    <variation>A</variation>
    <location>
        <position position="337"/>
    </location>
</feature>
<organism>
    <name type="scientific">Mus musculus</name>
    <name type="common">Mouse</name>
    <dbReference type="NCBI Taxonomy" id="10090"/>
    <lineage>
        <taxon>Eukaryota</taxon>
        <taxon>Metazoa</taxon>
        <taxon>Chordata</taxon>
        <taxon>Craniata</taxon>
        <taxon>Vertebrata</taxon>
        <taxon>Euteleostomi</taxon>
        <taxon>Mammalia</taxon>
        <taxon>Eutheria</taxon>
        <taxon>Euarchontoglires</taxon>
        <taxon>Glires</taxon>
        <taxon>Rodentia</taxon>
        <taxon>Myomorpha</taxon>
        <taxon>Muroidea</taxon>
        <taxon>Muridae</taxon>
        <taxon>Murinae</taxon>
        <taxon>Mus</taxon>
        <taxon>Mus</taxon>
    </lineage>
</organism>
<evidence type="ECO:0000256" key="1">
    <source>
        <dbReference type="SAM" id="MobiDB-lite"/>
    </source>
</evidence>
<evidence type="ECO:0000269" key="2">
    <source>
    </source>
</evidence>
<evidence type="ECO:0000269" key="3">
    <source>
    </source>
</evidence>
<evidence type="ECO:0000269" key="4">
    <source>
    </source>
</evidence>
<evidence type="ECO:0000305" key="5"/>